<keyword id="KW-0997">Cell inner membrane</keyword>
<keyword id="KW-1003">Cell membrane</keyword>
<keyword id="KW-0175">Coiled coil</keyword>
<keyword id="KW-0963">Cytoplasm</keyword>
<keyword id="KW-0472">Membrane</keyword>
<keyword id="KW-1185">Reference proteome</keyword>
<protein>
    <recommendedName>
        <fullName evidence="1">High frequency lysogenization protein HflD homolog</fullName>
    </recommendedName>
</protein>
<organism>
    <name type="scientific">Shigella sonnei (strain Ss046)</name>
    <dbReference type="NCBI Taxonomy" id="300269"/>
    <lineage>
        <taxon>Bacteria</taxon>
        <taxon>Pseudomonadati</taxon>
        <taxon>Pseudomonadota</taxon>
        <taxon>Gammaproteobacteria</taxon>
        <taxon>Enterobacterales</taxon>
        <taxon>Enterobacteriaceae</taxon>
        <taxon>Shigella</taxon>
    </lineage>
</organism>
<reference key="1">
    <citation type="journal article" date="2005" name="Nucleic Acids Res.">
        <title>Genome dynamics and diversity of Shigella species, the etiologic agents of bacillary dysentery.</title>
        <authorList>
            <person name="Yang F."/>
            <person name="Yang J."/>
            <person name="Zhang X."/>
            <person name="Chen L."/>
            <person name="Jiang Y."/>
            <person name="Yan Y."/>
            <person name="Tang X."/>
            <person name="Wang J."/>
            <person name="Xiong Z."/>
            <person name="Dong J."/>
            <person name="Xue Y."/>
            <person name="Zhu Y."/>
            <person name="Xu X."/>
            <person name="Sun L."/>
            <person name="Chen S."/>
            <person name="Nie H."/>
            <person name="Peng J."/>
            <person name="Xu J."/>
            <person name="Wang Y."/>
            <person name="Yuan Z."/>
            <person name="Wen Y."/>
            <person name="Yao Z."/>
            <person name="Shen Y."/>
            <person name="Qiang B."/>
            <person name="Hou Y."/>
            <person name="Yu J."/>
            <person name="Jin Q."/>
        </authorList>
    </citation>
    <scope>NUCLEOTIDE SEQUENCE [LARGE SCALE GENOMIC DNA]</scope>
    <source>
        <strain>Ss046</strain>
    </source>
</reference>
<name>HFLD_SHISS</name>
<sequence length="213" mass="22948">MAKNYYDITLALAGICQSARLVQQLAHQGHCDADALHVSLNSIIDMNPSSTLAVFGGSEANLRVGLETLLGVLNASSRQGLNAELTRYTLSLMVLERKLSSAKGALDTLGNRINGLQRQLEHFDLQSETLMSAMAAIYVDVISPLGPRIQVTGSPAVLQSPQVQAKVRATLLAGIRAAVLWHQVGGGRLQLMFSRNRLTTQAKQILAHLTPEL</sequence>
<comment type="subcellular location">
    <subcellularLocation>
        <location>Cytoplasm</location>
    </subcellularLocation>
    <subcellularLocation>
        <location evidence="1">Cell inner membrane</location>
        <topology evidence="1">Peripheral membrane protein</topology>
        <orientation evidence="1">Cytoplasmic side</orientation>
    </subcellularLocation>
</comment>
<comment type="similarity">
    <text evidence="1">Belongs to the HflD family.</text>
</comment>
<gene>
    <name evidence="1" type="primary">hflD</name>
    <name type="ordered locus">SSON_1150</name>
</gene>
<evidence type="ECO:0000255" key="1">
    <source>
        <dbReference type="HAMAP-Rule" id="MF_00695"/>
    </source>
</evidence>
<feature type="chain" id="PRO_1000045449" description="High frequency lysogenization protein HflD homolog">
    <location>
        <begin position="1"/>
        <end position="213"/>
    </location>
</feature>
<feature type="coiled-coil region" evidence="1">
    <location>
        <begin position="79"/>
        <end position="126"/>
    </location>
</feature>
<proteinExistence type="inferred from homology"/>
<accession>Q3Z2Y7</accession>
<dbReference type="EMBL" id="CP000038">
    <property type="protein sequence ID" value="AAZ87875.1"/>
    <property type="molecule type" value="Genomic_DNA"/>
</dbReference>
<dbReference type="RefSeq" id="WP_001297479.1">
    <property type="nucleotide sequence ID" value="NC_007384.1"/>
</dbReference>
<dbReference type="SMR" id="Q3Z2Y7"/>
<dbReference type="GeneID" id="93776278"/>
<dbReference type="KEGG" id="ssn:SSON_1150"/>
<dbReference type="HOGENOM" id="CLU_098920_0_0_6"/>
<dbReference type="Proteomes" id="UP000002529">
    <property type="component" value="Chromosome"/>
</dbReference>
<dbReference type="GO" id="GO:0005737">
    <property type="term" value="C:cytoplasm"/>
    <property type="evidence" value="ECO:0007669"/>
    <property type="project" value="UniProtKB-SubCell"/>
</dbReference>
<dbReference type="GO" id="GO:0005886">
    <property type="term" value="C:plasma membrane"/>
    <property type="evidence" value="ECO:0007669"/>
    <property type="project" value="UniProtKB-SubCell"/>
</dbReference>
<dbReference type="FunFam" id="1.10.3890.10:FF:000001">
    <property type="entry name" value="High frequency lysogenization protein HflD homolog"/>
    <property type="match status" value="1"/>
</dbReference>
<dbReference type="Gene3D" id="1.10.3890.10">
    <property type="entry name" value="HflD-like"/>
    <property type="match status" value="1"/>
</dbReference>
<dbReference type="HAMAP" id="MF_00695">
    <property type="entry name" value="HflD_protein"/>
    <property type="match status" value="1"/>
</dbReference>
<dbReference type="InterPro" id="IPR007451">
    <property type="entry name" value="HflD"/>
</dbReference>
<dbReference type="InterPro" id="IPR035932">
    <property type="entry name" value="HflD-like_sf"/>
</dbReference>
<dbReference type="NCBIfam" id="NF001245">
    <property type="entry name" value="PRK00218.1-1"/>
    <property type="match status" value="1"/>
</dbReference>
<dbReference type="NCBIfam" id="NF001246">
    <property type="entry name" value="PRK00218.1-2"/>
    <property type="match status" value="1"/>
</dbReference>
<dbReference type="NCBIfam" id="NF001248">
    <property type="entry name" value="PRK00218.1-4"/>
    <property type="match status" value="1"/>
</dbReference>
<dbReference type="NCBIfam" id="NF001249">
    <property type="entry name" value="PRK00218.1-5"/>
    <property type="match status" value="1"/>
</dbReference>
<dbReference type="PANTHER" id="PTHR38100">
    <property type="entry name" value="HIGH FREQUENCY LYSOGENIZATION PROTEIN HFLD"/>
    <property type="match status" value="1"/>
</dbReference>
<dbReference type="PANTHER" id="PTHR38100:SF1">
    <property type="entry name" value="HIGH FREQUENCY LYSOGENIZATION PROTEIN HFLD"/>
    <property type="match status" value="1"/>
</dbReference>
<dbReference type="Pfam" id="PF04356">
    <property type="entry name" value="DUF489"/>
    <property type="match status" value="1"/>
</dbReference>
<dbReference type="SUPFAM" id="SSF101322">
    <property type="entry name" value="YcfC-like"/>
    <property type="match status" value="1"/>
</dbReference>